<name>SURE_CLOBA</name>
<dbReference type="EC" id="3.1.3.5" evidence="1"/>
<dbReference type="EMBL" id="CP001078">
    <property type="protein sequence ID" value="ACD53733.1"/>
    <property type="molecule type" value="Genomic_DNA"/>
</dbReference>
<dbReference type="RefSeq" id="WP_012451578.1">
    <property type="nucleotide sequence ID" value="NC_010723.1"/>
</dbReference>
<dbReference type="SMR" id="B2UXL6"/>
<dbReference type="KEGG" id="cbt:CLH_2744"/>
<dbReference type="HOGENOM" id="CLU_045192_1_0_9"/>
<dbReference type="GO" id="GO:0005737">
    <property type="term" value="C:cytoplasm"/>
    <property type="evidence" value="ECO:0007669"/>
    <property type="project" value="UniProtKB-SubCell"/>
</dbReference>
<dbReference type="GO" id="GO:0008254">
    <property type="term" value="F:3'-nucleotidase activity"/>
    <property type="evidence" value="ECO:0007669"/>
    <property type="project" value="TreeGrafter"/>
</dbReference>
<dbReference type="GO" id="GO:0008253">
    <property type="term" value="F:5'-nucleotidase activity"/>
    <property type="evidence" value="ECO:0007669"/>
    <property type="project" value="UniProtKB-UniRule"/>
</dbReference>
<dbReference type="GO" id="GO:0004309">
    <property type="term" value="F:exopolyphosphatase activity"/>
    <property type="evidence" value="ECO:0007669"/>
    <property type="project" value="TreeGrafter"/>
</dbReference>
<dbReference type="GO" id="GO:0046872">
    <property type="term" value="F:metal ion binding"/>
    <property type="evidence" value="ECO:0007669"/>
    <property type="project" value="UniProtKB-UniRule"/>
</dbReference>
<dbReference type="GO" id="GO:0000166">
    <property type="term" value="F:nucleotide binding"/>
    <property type="evidence" value="ECO:0007669"/>
    <property type="project" value="UniProtKB-KW"/>
</dbReference>
<dbReference type="Gene3D" id="3.40.1210.10">
    <property type="entry name" value="Survival protein SurE-like phosphatase/nucleotidase"/>
    <property type="match status" value="1"/>
</dbReference>
<dbReference type="HAMAP" id="MF_00060">
    <property type="entry name" value="SurE"/>
    <property type="match status" value="1"/>
</dbReference>
<dbReference type="InterPro" id="IPR030048">
    <property type="entry name" value="SurE"/>
</dbReference>
<dbReference type="InterPro" id="IPR002828">
    <property type="entry name" value="SurE-like_Pase/nucleotidase"/>
</dbReference>
<dbReference type="InterPro" id="IPR036523">
    <property type="entry name" value="SurE-like_sf"/>
</dbReference>
<dbReference type="NCBIfam" id="NF010543">
    <property type="entry name" value="PRK13933.1"/>
    <property type="match status" value="1"/>
</dbReference>
<dbReference type="NCBIfam" id="TIGR00087">
    <property type="entry name" value="surE"/>
    <property type="match status" value="1"/>
</dbReference>
<dbReference type="PANTHER" id="PTHR30457">
    <property type="entry name" value="5'-NUCLEOTIDASE SURE"/>
    <property type="match status" value="1"/>
</dbReference>
<dbReference type="PANTHER" id="PTHR30457:SF12">
    <property type="entry name" value="5'_3'-NUCLEOTIDASE SURE"/>
    <property type="match status" value="1"/>
</dbReference>
<dbReference type="Pfam" id="PF01975">
    <property type="entry name" value="SurE"/>
    <property type="match status" value="1"/>
</dbReference>
<dbReference type="SUPFAM" id="SSF64167">
    <property type="entry name" value="SurE-like"/>
    <property type="match status" value="1"/>
</dbReference>
<accession>B2UXL6</accession>
<feature type="chain" id="PRO_1000091991" description="5'-nucleotidase SurE">
    <location>
        <begin position="1"/>
        <end position="251"/>
    </location>
</feature>
<feature type="binding site" evidence="1">
    <location>
        <position position="8"/>
    </location>
    <ligand>
        <name>a divalent metal cation</name>
        <dbReference type="ChEBI" id="CHEBI:60240"/>
    </ligand>
</feature>
<feature type="binding site" evidence="1">
    <location>
        <position position="9"/>
    </location>
    <ligand>
        <name>a divalent metal cation</name>
        <dbReference type="ChEBI" id="CHEBI:60240"/>
    </ligand>
</feature>
<feature type="binding site" evidence="1">
    <location>
        <position position="39"/>
    </location>
    <ligand>
        <name>a divalent metal cation</name>
        <dbReference type="ChEBI" id="CHEBI:60240"/>
    </ligand>
</feature>
<feature type="binding site" evidence="1">
    <location>
        <position position="95"/>
    </location>
    <ligand>
        <name>a divalent metal cation</name>
        <dbReference type="ChEBI" id="CHEBI:60240"/>
    </ligand>
</feature>
<keyword id="KW-0963">Cytoplasm</keyword>
<keyword id="KW-0378">Hydrolase</keyword>
<keyword id="KW-0479">Metal-binding</keyword>
<keyword id="KW-0547">Nucleotide-binding</keyword>
<proteinExistence type="inferred from homology"/>
<reference key="1">
    <citation type="submission" date="2008-05" db="EMBL/GenBank/DDBJ databases">
        <title>Complete genome sequence of Clostridium botulinum E3 str. Alaska E43.</title>
        <authorList>
            <person name="Brinkac L.M."/>
            <person name="Brown J.L."/>
            <person name="Bruce D."/>
            <person name="Detter C."/>
            <person name="Munk C."/>
            <person name="Smith L.A."/>
            <person name="Smith T.J."/>
            <person name="Sutton G."/>
            <person name="Brettin T.S."/>
        </authorList>
    </citation>
    <scope>NUCLEOTIDE SEQUENCE [LARGE SCALE GENOMIC DNA]</scope>
    <source>
        <strain>Alaska E43 / Type E3</strain>
    </source>
</reference>
<evidence type="ECO:0000255" key="1">
    <source>
        <dbReference type="HAMAP-Rule" id="MF_00060"/>
    </source>
</evidence>
<comment type="function">
    <text evidence="1">Nucleotidase that shows phosphatase activity on nucleoside 5'-monophosphates.</text>
</comment>
<comment type="catalytic activity">
    <reaction evidence="1">
        <text>a ribonucleoside 5'-phosphate + H2O = a ribonucleoside + phosphate</text>
        <dbReference type="Rhea" id="RHEA:12484"/>
        <dbReference type="ChEBI" id="CHEBI:15377"/>
        <dbReference type="ChEBI" id="CHEBI:18254"/>
        <dbReference type="ChEBI" id="CHEBI:43474"/>
        <dbReference type="ChEBI" id="CHEBI:58043"/>
        <dbReference type="EC" id="3.1.3.5"/>
    </reaction>
</comment>
<comment type="cofactor">
    <cofactor evidence="1">
        <name>a divalent metal cation</name>
        <dbReference type="ChEBI" id="CHEBI:60240"/>
    </cofactor>
    <text evidence="1">Binds 1 divalent metal cation per subunit.</text>
</comment>
<comment type="subcellular location">
    <subcellularLocation>
        <location evidence="1">Cytoplasm</location>
    </subcellularLocation>
</comment>
<comment type="similarity">
    <text evidence="1">Belongs to the SurE nucleotidase family.</text>
</comment>
<sequence length="251" mass="28057">MNILITNDDGINARGIKTLAEKMSKKHNVTIVAPREQKSASSHSISINIPIKIREEKIDGLDCKAYSLVGTPADCTQAGISLLVKDIDLVISGINRGFNSGTDILYSGTVSAAIEGAIYDVPSIAISMDVKWDRDDEDYSKAANWVNKVVDLAEKKYLKKNVVLNVNVPNINEEDIKGLKVCKIGKSTYKTEYVLLEEDNDKVYQTRGVRNQVEKDESDLYFLSQGYVTLTPLHFDFTNFKELNEVKKIFE</sequence>
<organism>
    <name type="scientific">Clostridium botulinum (strain Alaska E43 / Type E3)</name>
    <dbReference type="NCBI Taxonomy" id="508767"/>
    <lineage>
        <taxon>Bacteria</taxon>
        <taxon>Bacillati</taxon>
        <taxon>Bacillota</taxon>
        <taxon>Clostridia</taxon>
        <taxon>Eubacteriales</taxon>
        <taxon>Clostridiaceae</taxon>
        <taxon>Clostridium</taxon>
    </lineage>
</organism>
<gene>
    <name evidence="1" type="primary">surE</name>
    <name type="ordered locus">CLH_2744</name>
</gene>
<protein>
    <recommendedName>
        <fullName evidence="1">5'-nucleotidase SurE</fullName>
        <ecNumber evidence="1">3.1.3.5</ecNumber>
    </recommendedName>
    <alternativeName>
        <fullName evidence="1">Nucleoside 5'-monophosphate phosphohydrolase</fullName>
    </alternativeName>
</protein>